<keyword id="KW-0067">ATP-binding</keyword>
<keyword id="KW-0460">Magnesium</keyword>
<keyword id="KW-0547">Nucleotide-binding</keyword>
<keyword id="KW-1185">Reference proteome</keyword>
<keyword id="KW-0808">Transferase</keyword>
<keyword id="KW-0819">tRNA processing</keyword>
<proteinExistence type="inferred from homology"/>
<sequence>MMQNLARDIDAILITGPTASGKSALAVKLAQRHGGVVINADSMQVYGTLKVLTARPDQSEMGGVEHFLYGHIPPGRAYSTGVWLREAEALVARLGKEGRLPVFVGGTGLYFKALTGGLSDMPEIPLETRKRLRTRLTEEGAEALHGELSARDPETAGRVRPSDGQRIVRALEIIEATGRPIGSYQQSRGPVIIDPARAQKIVVLPERPVLHGRIDRRFETMLARGAVEEVRALLALRLPPEMPVMKAIGVPQIAAMLKGEMSEKQVIEAGAAATRQYAKRQMTWFRNQLDETWQRIEDPDALG</sequence>
<feature type="chain" id="PRO_0000163962" description="tRNA dimethylallyltransferase">
    <location>
        <begin position="1"/>
        <end position="303"/>
    </location>
</feature>
<feature type="region of interest" description="Interaction with substrate tRNA" evidence="1">
    <location>
        <begin position="41"/>
        <end position="44"/>
    </location>
</feature>
<feature type="region of interest" description="Disordered" evidence="2">
    <location>
        <begin position="141"/>
        <end position="161"/>
    </location>
</feature>
<feature type="region of interest" description="Interaction with substrate tRNA" evidence="1">
    <location>
        <begin position="165"/>
        <end position="169"/>
    </location>
</feature>
<feature type="binding site" evidence="1">
    <location>
        <begin position="16"/>
        <end position="23"/>
    </location>
    <ligand>
        <name>ATP</name>
        <dbReference type="ChEBI" id="CHEBI:30616"/>
    </ligand>
</feature>
<feature type="binding site" evidence="1">
    <location>
        <begin position="18"/>
        <end position="23"/>
    </location>
    <ligand>
        <name>substrate</name>
    </ligand>
</feature>
<feature type="site" description="Interaction with substrate tRNA" evidence="1">
    <location>
        <position position="107"/>
    </location>
</feature>
<feature type="site" description="Interaction with substrate tRNA" evidence="1">
    <location>
        <position position="129"/>
    </location>
</feature>
<gene>
    <name evidence="1" type="primary">miaA</name>
    <name type="ordered locus">R02118</name>
    <name type="ORF">SMc01435</name>
</gene>
<accession>Q92NR2</accession>
<organism>
    <name type="scientific">Rhizobium meliloti (strain 1021)</name>
    <name type="common">Ensifer meliloti</name>
    <name type="synonym">Sinorhizobium meliloti</name>
    <dbReference type="NCBI Taxonomy" id="266834"/>
    <lineage>
        <taxon>Bacteria</taxon>
        <taxon>Pseudomonadati</taxon>
        <taxon>Pseudomonadota</taxon>
        <taxon>Alphaproteobacteria</taxon>
        <taxon>Hyphomicrobiales</taxon>
        <taxon>Rhizobiaceae</taxon>
        <taxon>Sinorhizobium/Ensifer group</taxon>
        <taxon>Sinorhizobium</taxon>
    </lineage>
</organism>
<comment type="function">
    <text evidence="1">Catalyzes the transfer of a dimethylallyl group onto the adenine at position 37 in tRNAs that read codons beginning with uridine, leading to the formation of N6-(dimethylallyl)adenosine (i(6)A).</text>
</comment>
<comment type="catalytic activity">
    <reaction evidence="1">
        <text>adenosine(37) in tRNA + dimethylallyl diphosphate = N(6)-dimethylallyladenosine(37) in tRNA + diphosphate</text>
        <dbReference type="Rhea" id="RHEA:26482"/>
        <dbReference type="Rhea" id="RHEA-COMP:10162"/>
        <dbReference type="Rhea" id="RHEA-COMP:10375"/>
        <dbReference type="ChEBI" id="CHEBI:33019"/>
        <dbReference type="ChEBI" id="CHEBI:57623"/>
        <dbReference type="ChEBI" id="CHEBI:74411"/>
        <dbReference type="ChEBI" id="CHEBI:74415"/>
        <dbReference type="EC" id="2.5.1.75"/>
    </reaction>
</comment>
<comment type="cofactor">
    <cofactor evidence="1">
        <name>Mg(2+)</name>
        <dbReference type="ChEBI" id="CHEBI:18420"/>
    </cofactor>
</comment>
<comment type="subunit">
    <text evidence="1">Monomer.</text>
</comment>
<comment type="similarity">
    <text evidence="1">Belongs to the IPP transferase family.</text>
</comment>
<name>MIAA_RHIME</name>
<protein>
    <recommendedName>
        <fullName evidence="1">tRNA dimethylallyltransferase</fullName>
        <ecNumber evidence="1">2.5.1.75</ecNumber>
    </recommendedName>
    <alternativeName>
        <fullName evidence="1">Dimethylallyl diphosphate:tRNA dimethylallyltransferase</fullName>
        <shortName evidence="1">DMAPP:tRNA dimethylallyltransferase</shortName>
        <shortName evidence="1">DMATase</shortName>
    </alternativeName>
    <alternativeName>
        <fullName evidence="1">Isopentenyl-diphosphate:tRNA isopentenyltransferase</fullName>
        <shortName evidence="1">IPP transferase</shortName>
        <shortName evidence="1">IPPT</shortName>
        <shortName evidence="1">IPTase</shortName>
    </alternativeName>
</protein>
<evidence type="ECO:0000255" key="1">
    <source>
        <dbReference type="HAMAP-Rule" id="MF_00185"/>
    </source>
</evidence>
<evidence type="ECO:0000256" key="2">
    <source>
        <dbReference type="SAM" id="MobiDB-lite"/>
    </source>
</evidence>
<reference key="1">
    <citation type="journal article" date="2001" name="Proc. Natl. Acad. Sci. U.S.A.">
        <title>Analysis of the chromosome sequence of the legume symbiont Sinorhizobium meliloti strain 1021.</title>
        <authorList>
            <person name="Capela D."/>
            <person name="Barloy-Hubler F."/>
            <person name="Gouzy J."/>
            <person name="Bothe G."/>
            <person name="Ampe F."/>
            <person name="Batut J."/>
            <person name="Boistard P."/>
            <person name="Becker A."/>
            <person name="Boutry M."/>
            <person name="Cadieu E."/>
            <person name="Dreano S."/>
            <person name="Gloux S."/>
            <person name="Godrie T."/>
            <person name="Goffeau A."/>
            <person name="Kahn D."/>
            <person name="Kiss E."/>
            <person name="Lelaure V."/>
            <person name="Masuy D."/>
            <person name="Pohl T."/>
            <person name="Portetelle D."/>
            <person name="Puehler A."/>
            <person name="Purnelle B."/>
            <person name="Ramsperger U."/>
            <person name="Renard C."/>
            <person name="Thebault P."/>
            <person name="Vandenbol M."/>
            <person name="Weidner S."/>
            <person name="Galibert F."/>
        </authorList>
    </citation>
    <scope>NUCLEOTIDE SEQUENCE [LARGE SCALE GENOMIC DNA]</scope>
    <source>
        <strain>1021</strain>
    </source>
</reference>
<reference key="2">
    <citation type="journal article" date="2001" name="Science">
        <title>The composite genome of the legume symbiont Sinorhizobium meliloti.</title>
        <authorList>
            <person name="Galibert F."/>
            <person name="Finan T.M."/>
            <person name="Long S.R."/>
            <person name="Puehler A."/>
            <person name="Abola P."/>
            <person name="Ampe F."/>
            <person name="Barloy-Hubler F."/>
            <person name="Barnett M.J."/>
            <person name="Becker A."/>
            <person name="Boistard P."/>
            <person name="Bothe G."/>
            <person name="Boutry M."/>
            <person name="Bowser L."/>
            <person name="Buhrmester J."/>
            <person name="Cadieu E."/>
            <person name="Capela D."/>
            <person name="Chain P."/>
            <person name="Cowie A."/>
            <person name="Davis R.W."/>
            <person name="Dreano S."/>
            <person name="Federspiel N.A."/>
            <person name="Fisher R.F."/>
            <person name="Gloux S."/>
            <person name="Godrie T."/>
            <person name="Goffeau A."/>
            <person name="Golding B."/>
            <person name="Gouzy J."/>
            <person name="Gurjal M."/>
            <person name="Hernandez-Lucas I."/>
            <person name="Hong A."/>
            <person name="Huizar L."/>
            <person name="Hyman R.W."/>
            <person name="Jones T."/>
            <person name="Kahn D."/>
            <person name="Kahn M.L."/>
            <person name="Kalman S."/>
            <person name="Keating D.H."/>
            <person name="Kiss E."/>
            <person name="Komp C."/>
            <person name="Lelaure V."/>
            <person name="Masuy D."/>
            <person name="Palm C."/>
            <person name="Peck M.C."/>
            <person name="Pohl T.M."/>
            <person name="Portetelle D."/>
            <person name="Purnelle B."/>
            <person name="Ramsperger U."/>
            <person name="Surzycki R."/>
            <person name="Thebault P."/>
            <person name="Vandenbol M."/>
            <person name="Vorhoelter F.J."/>
            <person name="Weidner S."/>
            <person name="Wells D.H."/>
            <person name="Wong K."/>
            <person name="Yeh K.-C."/>
            <person name="Batut J."/>
        </authorList>
    </citation>
    <scope>NUCLEOTIDE SEQUENCE [LARGE SCALE GENOMIC DNA]</scope>
    <source>
        <strain>1021</strain>
    </source>
</reference>
<dbReference type="EC" id="2.5.1.75" evidence="1"/>
<dbReference type="EMBL" id="AL591688">
    <property type="protein sequence ID" value="CAC46697.1"/>
    <property type="molecule type" value="Genomic_DNA"/>
</dbReference>
<dbReference type="RefSeq" id="NP_386224.1">
    <property type="nucleotide sequence ID" value="NC_003047.1"/>
</dbReference>
<dbReference type="RefSeq" id="WP_003534915.1">
    <property type="nucleotide sequence ID" value="NC_003047.1"/>
</dbReference>
<dbReference type="SMR" id="Q92NR2"/>
<dbReference type="EnsemblBacteria" id="CAC46697">
    <property type="protein sequence ID" value="CAC46697"/>
    <property type="gene ID" value="SMc01435"/>
</dbReference>
<dbReference type="KEGG" id="sme:SMc01435"/>
<dbReference type="PATRIC" id="fig|266834.11.peg.3577"/>
<dbReference type="eggNOG" id="COG0324">
    <property type="taxonomic scope" value="Bacteria"/>
</dbReference>
<dbReference type="HOGENOM" id="CLU_032616_0_1_5"/>
<dbReference type="OrthoDB" id="9776390at2"/>
<dbReference type="Proteomes" id="UP000001976">
    <property type="component" value="Chromosome"/>
</dbReference>
<dbReference type="GO" id="GO:0005524">
    <property type="term" value="F:ATP binding"/>
    <property type="evidence" value="ECO:0007669"/>
    <property type="project" value="UniProtKB-UniRule"/>
</dbReference>
<dbReference type="GO" id="GO:0052381">
    <property type="term" value="F:tRNA dimethylallyltransferase activity"/>
    <property type="evidence" value="ECO:0007669"/>
    <property type="project" value="UniProtKB-UniRule"/>
</dbReference>
<dbReference type="GO" id="GO:0006400">
    <property type="term" value="P:tRNA modification"/>
    <property type="evidence" value="ECO:0007669"/>
    <property type="project" value="TreeGrafter"/>
</dbReference>
<dbReference type="FunFam" id="1.10.20.140:FF:000001">
    <property type="entry name" value="tRNA dimethylallyltransferase"/>
    <property type="match status" value="1"/>
</dbReference>
<dbReference type="Gene3D" id="1.10.20.140">
    <property type="match status" value="1"/>
</dbReference>
<dbReference type="Gene3D" id="3.40.50.300">
    <property type="entry name" value="P-loop containing nucleotide triphosphate hydrolases"/>
    <property type="match status" value="1"/>
</dbReference>
<dbReference type="HAMAP" id="MF_00185">
    <property type="entry name" value="IPP_trans"/>
    <property type="match status" value="1"/>
</dbReference>
<dbReference type="InterPro" id="IPR039657">
    <property type="entry name" value="Dimethylallyltransferase"/>
</dbReference>
<dbReference type="InterPro" id="IPR018022">
    <property type="entry name" value="IPT"/>
</dbReference>
<dbReference type="InterPro" id="IPR027417">
    <property type="entry name" value="P-loop_NTPase"/>
</dbReference>
<dbReference type="NCBIfam" id="TIGR00174">
    <property type="entry name" value="miaA"/>
    <property type="match status" value="1"/>
</dbReference>
<dbReference type="PANTHER" id="PTHR11088">
    <property type="entry name" value="TRNA DIMETHYLALLYLTRANSFERASE"/>
    <property type="match status" value="1"/>
</dbReference>
<dbReference type="PANTHER" id="PTHR11088:SF60">
    <property type="entry name" value="TRNA DIMETHYLALLYLTRANSFERASE"/>
    <property type="match status" value="1"/>
</dbReference>
<dbReference type="Pfam" id="PF01715">
    <property type="entry name" value="IPPT"/>
    <property type="match status" value="1"/>
</dbReference>
<dbReference type="SUPFAM" id="SSF52540">
    <property type="entry name" value="P-loop containing nucleoside triphosphate hydrolases"/>
    <property type="match status" value="1"/>
</dbReference>